<proteinExistence type="evidence at protein level"/>
<name>DHX58_MOUSE</name>
<reference key="1">
    <citation type="journal article" date="2001" name="Genomics">
        <title>Structure of the mouse Stat 3/5 locus: evolution from Drosophila to zebrafish to mouse.</title>
        <authorList>
            <person name="Miyoshi K."/>
            <person name="Cui Y."/>
            <person name="Riedlinger G."/>
            <person name="Robinson P."/>
            <person name="Lehoczky J."/>
            <person name="Zon L."/>
            <person name="Oka T."/>
            <person name="Dewar K."/>
            <person name="Hennighausen L."/>
        </authorList>
    </citation>
    <scope>NUCLEOTIDE SEQUENCE [GENOMIC DNA / MRNA]</scope>
</reference>
<reference key="2">
    <citation type="journal article" date="2009" name="PLoS Biol.">
        <title>Lineage-specific biology revealed by a finished genome assembly of the mouse.</title>
        <authorList>
            <person name="Church D.M."/>
            <person name="Goodstadt L."/>
            <person name="Hillier L.W."/>
            <person name="Zody M.C."/>
            <person name="Goldstein S."/>
            <person name="She X."/>
            <person name="Bult C.J."/>
            <person name="Agarwala R."/>
            <person name="Cherry J.L."/>
            <person name="DiCuccio M."/>
            <person name="Hlavina W."/>
            <person name="Kapustin Y."/>
            <person name="Meric P."/>
            <person name="Maglott D."/>
            <person name="Birtle Z."/>
            <person name="Marques A.C."/>
            <person name="Graves T."/>
            <person name="Zhou S."/>
            <person name="Teague B."/>
            <person name="Potamousis K."/>
            <person name="Churas C."/>
            <person name="Place M."/>
            <person name="Herschleb J."/>
            <person name="Runnheim R."/>
            <person name="Forrest D."/>
            <person name="Amos-Landgraf J."/>
            <person name="Schwartz D.C."/>
            <person name="Cheng Z."/>
            <person name="Lindblad-Toh K."/>
            <person name="Eichler E.E."/>
            <person name="Ponting C.P."/>
        </authorList>
    </citation>
    <scope>NUCLEOTIDE SEQUENCE [LARGE SCALE GENOMIC DNA]</scope>
    <source>
        <strain>C57BL/6J</strain>
    </source>
</reference>
<reference key="3">
    <citation type="journal article" date="2004" name="Genome Res.">
        <title>The status, quality, and expansion of the NIH full-length cDNA project: the Mammalian Gene Collection (MGC).</title>
        <authorList>
            <consortium name="The MGC Project Team"/>
        </authorList>
    </citation>
    <scope>NUCLEOTIDE SEQUENCE [LARGE SCALE MRNA]</scope>
    <source>
        <strain>Czech II</strain>
        <tissue>Mammary gland</tissue>
    </source>
</reference>
<reference key="4">
    <citation type="journal article" date="2001" name="Genomics">
        <title>The Stat3/5 locus encodes novel endoplasmic reticulum and helicase-like proteins that are preferentially expressed in normal and neoplastic mammary tissue.</title>
        <authorList>
            <person name="Cui Y."/>
            <person name="Li M."/>
            <person name="Walton K.D."/>
            <person name="Sun K."/>
            <person name="Hanover J.A."/>
            <person name="Furth P.A."/>
            <person name="Hennighausen L."/>
        </authorList>
    </citation>
    <scope>SUBCELLULAR LOCATION</scope>
    <scope>TISSUE SPECIFICITY</scope>
</reference>
<reference key="5">
    <citation type="journal article" date="2007" name="J. Immunol.">
        <title>Loss of DExD/H box RNA helicase LGP2 manifests disparate antiviral responses.</title>
        <authorList>
            <person name="Venkataraman T."/>
            <person name="Valdes M."/>
            <person name="Elsby R."/>
            <person name="Kakuta S."/>
            <person name="Caceres G."/>
            <person name="Saijo S."/>
            <person name="Iwakura Y."/>
            <person name="Barber G.N."/>
        </authorList>
    </citation>
    <scope>FUNCTION</scope>
</reference>
<reference key="6">
    <citation type="journal article" date="2007" name="Sci. STKE">
        <title>Regulation of interferon production by RIG-I and LGP2: a lesson in self-control.</title>
        <authorList>
            <person name="Vitour D."/>
            <person name="Meurs E.F."/>
        </authorList>
    </citation>
    <scope>REVIEW ON FUNCTION</scope>
</reference>
<reference key="7">
    <citation type="journal article" date="2010" name="Cell">
        <title>A tissue-specific atlas of mouse protein phosphorylation and expression.</title>
        <authorList>
            <person name="Huttlin E.L."/>
            <person name="Jedrychowski M.P."/>
            <person name="Elias J.E."/>
            <person name="Goswami T."/>
            <person name="Rad R."/>
            <person name="Beausoleil S.A."/>
            <person name="Villen J."/>
            <person name="Haas W."/>
            <person name="Sowa M.E."/>
            <person name="Gygi S.P."/>
        </authorList>
    </citation>
    <scope>IDENTIFICATION BY MASS SPECTROMETRY [LARGE SCALE ANALYSIS]</scope>
    <source>
        <tissue>Spleen</tissue>
    </source>
</reference>
<reference key="8">
    <citation type="journal article" date="2010" name="Proc. Natl. Acad. Sci. U.S.A.">
        <title>LGP2 is a positive regulator of RIG-I- and MDA5-mediated antiviral responses.</title>
        <authorList>
            <person name="Satoh T."/>
            <person name="Kato H."/>
            <person name="Kumagai Y."/>
            <person name="Yoneyama M."/>
            <person name="Sato S."/>
            <person name="Matsushita K."/>
            <person name="Tsujimura T."/>
            <person name="Fujita T."/>
            <person name="Akira S."/>
            <person name="Takeuchi O."/>
        </authorList>
    </citation>
    <scope>FUNCTION</scope>
    <scope>MUTAGENESIS OF LYS-30</scope>
    <scope>DISRUPTION PHENOTYPE</scope>
</reference>
<reference key="9">
    <citation type="journal article" date="2011" name="Immunity">
        <title>Immune signaling by RIG-I-like receptors.</title>
        <authorList>
            <person name="Loo Y.M."/>
            <person name="Gale M. Jr."/>
        </authorList>
    </citation>
    <scope>REVIEW ON FUNCTION</scope>
</reference>
<reference key="10">
    <citation type="journal article" date="2011" name="J. Virol.">
        <title>Ambivalent role of the innate immune response in rabies virus pathogenesis.</title>
        <authorList>
            <person name="Chopy D."/>
            <person name="Pothlichet J."/>
            <person name="Lafage M."/>
            <person name="Megret F."/>
            <person name="Fiette L."/>
            <person name="Si-Tahar M."/>
            <person name="Lafon M."/>
        </authorList>
    </citation>
    <scope>FUNCTION</scope>
</reference>
<reference key="11">
    <citation type="journal article" date="2011" name="PLoS ONE">
        <title>Impaired cellular responses to cytosolic DNA or infection with Listeria monocytogenes and vaccinia virus in the absence of the murine LGP2 protein.</title>
        <authorList>
            <person name="Pollpeter D."/>
            <person name="Komuro A."/>
            <person name="Barber G.N."/>
            <person name="Horvath C.M."/>
        </authorList>
    </citation>
    <scope>FUNCTION</scope>
</reference>
<reference key="12">
    <citation type="journal article" date="2012" name="Eur. J. Cell Biol.">
        <title>Regulation of RLR-mediated innate immune signaling--it is all about keeping the balance.</title>
        <authorList>
            <person name="Eisenaecher K."/>
            <person name="Krug A."/>
        </authorList>
    </citation>
    <scope>REVIEW ON FUNCTION</scope>
</reference>
<reference key="13">
    <citation type="journal article" date="2012" name="Eur. J. Cell Biol.">
        <title>Sensing of viral nucleic acids by RIG-I: from translocation to translation.</title>
        <authorList>
            <person name="Schmidt A."/>
            <person name="Rothenfusser S."/>
            <person name="Hopfner K.P."/>
        </authorList>
    </citation>
    <scope>REVIEW ON FUNCTION</scope>
</reference>
<dbReference type="EC" id="3.6.4.13" evidence="2"/>
<dbReference type="EMBL" id="AF316999">
    <property type="protein sequence ID" value="AAK15474.1"/>
    <property type="molecule type" value="mRNA"/>
</dbReference>
<dbReference type="EMBL" id="AF317000">
    <property type="protein sequence ID" value="AAK15475.1"/>
    <property type="molecule type" value="Genomic_DNA"/>
</dbReference>
<dbReference type="EMBL" id="AL591469">
    <property type="status" value="NOT_ANNOTATED_CDS"/>
    <property type="molecule type" value="Genomic_DNA"/>
</dbReference>
<dbReference type="EMBL" id="BC029209">
    <property type="protein sequence ID" value="AAH29209.1"/>
    <property type="molecule type" value="mRNA"/>
</dbReference>
<dbReference type="CCDS" id="CCDS25431.1"/>
<dbReference type="RefSeq" id="NP_084426.2">
    <property type="nucleotide sequence ID" value="NM_030150.2"/>
</dbReference>
<dbReference type="SMR" id="Q99J87"/>
<dbReference type="BioGRID" id="219822">
    <property type="interactions" value="2"/>
</dbReference>
<dbReference type="FunCoup" id="Q99J87">
    <property type="interactions" value="219"/>
</dbReference>
<dbReference type="STRING" id="10090.ENSMUSP00000017974"/>
<dbReference type="GlyGen" id="Q99J87">
    <property type="glycosylation" value="2 sites, 1 O-linked glycan (2 sites)"/>
</dbReference>
<dbReference type="iPTMnet" id="Q99J87"/>
<dbReference type="PhosphoSitePlus" id="Q99J87"/>
<dbReference type="SwissPalm" id="Q99J87"/>
<dbReference type="PaxDb" id="10090-ENSMUSP00000017974"/>
<dbReference type="ProteomicsDB" id="279533"/>
<dbReference type="Antibodypedia" id="16840">
    <property type="antibodies" value="373 antibodies from 35 providers"/>
</dbReference>
<dbReference type="DNASU" id="80861"/>
<dbReference type="Ensembl" id="ENSMUST00000017974.13">
    <property type="protein sequence ID" value="ENSMUSP00000017974.7"/>
    <property type="gene ID" value="ENSMUSG00000017830.16"/>
</dbReference>
<dbReference type="GeneID" id="80861"/>
<dbReference type="KEGG" id="mmu:80861"/>
<dbReference type="UCSC" id="uc007llx.1">
    <property type="organism name" value="mouse"/>
</dbReference>
<dbReference type="AGR" id="MGI:1931560"/>
<dbReference type="CTD" id="79132"/>
<dbReference type="MGI" id="MGI:1931560">
    <property type="gene designation" value="Dhx58"/>
</dbReference>
<dbReference type="VEuPathDB" id="HostDB:ENSMUSG00000017830"/>
<dbReference type="eggNOG" id="KOG0354">
    <property type="taxonomic scope" value="Eukaryota"/>
</dbReference>
<dbReference type="GeneTree" id="ENSGT00940000153173"/>
<dbReference type="HOGENOM" id="CLU_006888_2_1_1"/>
<dbReference type="InParanoid" id="Q99J87"/>
<dbReference type="OMA" id="IFYEPVP"/>
<dbReference type="OrthoDB" id="416741at2759"/>
<dbReference type="PhylomeDB" id="Q99J87"/>
<dbReference type="TreeFam" id="TF330258"/>
<dbReference type="BioGRID-ORCS" id="80861">
    <property type="hits" value="4 hits in 80 CRISPR screens"/>
</dbReference>
<dbReference type="PRO" id="PR:Q99J87"/>
<dbReference type="Proteomes" id="UP000000589">
    <property type="component" value="Chromosome 11"/>
</dbReference>
<dbReference type="RNAct" id="Q99J87">
    <property type="molecule type" value="protein"/>
</dbReference>
<dbReference type="Bgee" id="ENSMUSG00000017830">
    <property type="expression patterns" value="Expressed in granulocyte and 107 other cell types or tissues"/>
</dbReference>
<dbReference type="GO" id="GO:0005737">
    <property type="term" value="C:cytoplasm"/>
    <property type="evidence" value="ECO:0000314"/>
    <property type="project" value="MGI"/>
</dbReference>
<dbReference type="GO" id="GO:0005524">
    <property type="term" value="F:ATP binding"/>
    <property type="evidence" value="ECO:0007669"/>
    <property type="project" value="UniProtKB-KW"/>
</dbReference>
<dbReference type="GO" id="GO:0016887">
    <property type="term" value="F:ATP hydrolysis activity"/>
    <property type="evidence" value="ECO:0000250"/>
    <property type="project" value="UniProtKB"/>
</dbReference>
<dbReference type="GO" id="GO:0003677">
    <property type="term" value="F:DNA binding"/>
    <property type="evidence" value="ECO:0007669"/>
    <property type="project" value="InterPro"/>
</dbReference>
<dbReference type="GO" id="GO:0003725">
    <property type="term" value="F:double-stranded RNA binding"/>
    <property type="evidence" value="ECO:0000314"/>
    <property type="project" value="MGI"/>
</dbReference>
<dbReference type="GO" id="GO:0003724">
    <property type="term" value="F:RNA helicase activity"/>
    <property type="evidence" value="ECO:0000250"/>
    <property type="project" value="UniProtKB"/>
</dbReference>
<dbReference type="GO" id="GO:0003727">
    <property type="term" value="F:single-stranded RNA binding"/>
    <property type="evidence" value="ECO:0000250"/>
    <property type="project" value="UniProtKB"/>
</dbReference>
<dbReference type="GO" id="GO:0008270">
    <property type="term" value="F:zinc ion binding"/>
    <property type="evidence" value="ECO:0000250"/>
    <property type="project" value="UniProtKB"/>
</dbReference>
<dbReference type="GO" id="GO:0002753">
    <property type="term" value="P:cytoplasmic pattern recognition receptor signaling pathway"/>
    <property type="evidence" value="ECO:0000250"/>
    <property type="project" value="UniProtKB"/>
</dbReference>
<dbReference type="GO" id="GO:0051607">
    <property type="term" value="P:defense response to virus"/>
    <property type="evidence" value="ECO:0007669"/>
    <property type="project" value="UniProtKB-KW"/>
</dbReference>
<dbReference type="GO" id="GO:0045087">
    <property type="term" value="P:innate immune response"/>
    <property type="evidence" value="ECO:0007669"/>
    <property type="project" value="UniProtKB-KW"/>
</dbReference>
<dbReference type="GO" id="GO:0045824">
    <property type="term" value="P:negative regulation of innate immune response"/>
    <property type="evidence" value="ECO:0000315"/>
    <property type="project" value="UniProtKB"/>
</dbReference>
<dbReference type="GO" id="GO:0039534">
    <property type="term" value="P:negative regulation of MDA-5 signaling pathway"/>
    <property type="evidence" value="ECO:0000250"/>
    <property type="project" value="UniProtKB"/>
</dbReference>
<dbReference type="GO" id="GO:0039536">
    <property type="term" value="P:negative regulation of RIG-I signaling pathway"/>
    <property type="evidence" value="ECO:0000315"/>
    <property type="project" value="UniProtKB"/>
</dbReference>
<dbReference type="GO" id="GO:0032480">
    <property type="term" value="P:negative regulation of type I interferon production"/>
    <property type="evidence" value="ECO:0000315"/>
    <property type="project" value="UniProtKB"/>
</dbReference>
<dbReference type="GO" id="GO:1900245">
    <property type="term" value="P:positive regulation of MDA-5 signaling pathway"/>
    <property type="evidence" value="ECO:0000315"/>
    <property type="project" value="UniProtKB"/>
</dbReference>
<dbReference type="GO" id="GO:1900246">
    <property type="term" value="P:positive regulation of RIG-I signaling pathway"/>
    <property type="evidence" value="ECO:0000315"/>
    <property type="project" value="UniProtKB"/>
</dbReference>
<dbReference type="GO" id="GO:0032481">
    <property type="term" value="P:positive regulation of type I interferon production"/>
    <property type="evidence" value="ECO:0000315"/>
    <property type="project" value="UniProtKB"/>
</dbReference>
<dbReference type="GO" id="GO:0009617">
    <property type="term" value="P:response to bacterium"/>
    <property type="evidence" value="ECO:0000270"/>
    <property type="project" value="MGI"/>
</dbReference>
<dbReference type="GO" id="GO:0009615">
    <property type="term" value="P:response to virus"/>
    <property type="evidence" value="ECO:0000315"/>
    <property type="project" value="UniProtKB"/>
</dbReference>
<dbReference type="CDD" id="cd15806">
    <property type="entry name" value="LGP2_C"/>
    <property type="match status" value="1"/>
</dbReference>
<dbReference type="CDD" id="cd12090">
    <property type="entry name" value="MDA5_ID"/>
    <property type="match status" value="1"/>
</dbReference>
<dbReference type="CDD" id="cd18802">
    <property type="entry name" value="SF2_C_dicer"/>
    <property type="match status" value="1"/>
</dbReference>
<dbReference type="Gene3D" id="1.20.1320.30">
    <property type="match status" value="1"/>
</dbReference>
<dbReference type="Gene3D" id="3.40.50.300">
    <property type="entry name" value="P-loop containing nucleotide triphosphate hydrolases"/>
    <property type="match status" value="2"/>
</dbReference>
<dbReference type="Gene3D" id="2.170.150.30">
    <property type="entry name" value="RIG-I-like receptor, C-terminal regulatory domain"/>
    <property type="match status" value="1"/>
</dbReference>
<dbReference type="InterPro" id="IPR006935">
    <property type="entry name" value="Helicase/UvrB_N"/>
</dbReference>
<dbReference type="InterPro" id="IPR014001">
    <property type="entry name" value="Helicase_ATP-bd"/>
</dbReference>
<dbReference type="InterPro" id="IPR001650">
    <property type="entry name" value="Helicase_C-like"/>
</dbReference>
<dbReference type="InterPro" id="IPR027417">
    <property type="entry name" value="P-loop_NTPase"/>
</dbReference>
<dbReference type="InterPro" id="IPR041204">
    <property type="entry name" value="RIG-I-like_C"/>
</dbReference>
<dbReference type="InterPro" id="IPR038557">
    <property type="entry name" value="RLR_C_sf"/>
</dbReference>
<dbReference type="InterPro" id="IPR021673">
    <property type="entry name" value="RLR_CTR"/>
</dbReference>
<dbReference type="InterPro" id="IPR051363">
    <property type="entry name" value="RLR_Helicase"/>
</dbReference>
<dbReference type="PANTHER" id="PTHR14074:SF7">
    <property type="entry name" value="ATP-DEPENDENT RNA HELICASE DHX58"/>
    <property type="match status" value="1"/>
</dbReference>
<dbReference type="PANTHER" id="PTHR14074">
    <property type="entry name" value="HELICASE WITH DEATH DOMAIN-RELATED"/>
    <property type="match status" value="1"/>
</dbReference>
<dbReference type="Pfam" id="PF00271">
    <property type="entry name" value="Helicase_C"/>
    <property type="match status" value="1"/>
</dbReference>
<dbReference type="Pfam" id="PF04851">
    <property type="entry name" value="ResIII"/>
    <property type="match status" value="1"/>
</dbReference>
<dbReference type="Pfam" id="PF18119">
    <property type="entry name" value="RIG-I_C"/>
    <property type="match status" value="1"/>
</dbReference>
<dbReference type="Pfam" id="PF11648">
    <property type="entry name" value="RIG-I_C-RD"/>
    <property type="match status" value="1"/>
</dbReference>
<dbReference type="SMART" id="SM00487">
    <property type="entry name" value="DEXDc"/>
    <property type="match status" value="1"/>
</dbReference>
<dbReference type="SMART" id="SM00490">
    <property type="entry name" value="HELICc"/>
    <property type="match status" value="1"/>
</dbReference>
<dbReference type="SUPFAM" id="SSF52540">
    <property type="entry name" value="P-loop containing nucleoside triphosphate hydrolases"/>
    <property type="match status" value="1"/>
</dbReference>
<dbReference type="PROSITE" id="PS51192">
    <property type="entry name" value="HELICASE_ATP_BIND_1"/>
    <property type="match status" value="1"/>
</dbReference>
<dbReference type="PROSITE" id="PS51194">
    <property type="entry name" value="HELICASE_CTER"/>
    <property type="match status" value="1"/>
</dbReference>
<dbReference type="PROSITE" id="PS51789">
    <property type="entry name" value="RLR_CTR"/>
    <property type="match status" value="1"/>
</dbReference>
<feature type="chain" id="PRO_0000102011" description="ATP-dependent RNA helicase DHX58">
    <location>
        <begin position="1"/>
        <end position="678"/>
    </location>
</feature>
<feature type="domain" description="Helicase ATP-binding" evidence="4">
    <location>
        <begin position="11"/>
        <end position="188"/>
    </location>
</feature>
<feature type="domain" description="Helicase C-terminal" evidence="5">
    <location>
        <begin position="353"/>
        <end position="514"/>
    </location>
</feature>
<feature type="domain" description="RLR CTR" evidence="6">
    <location>
        <begin position="542"/>
        <end position="669"/>
    </location>
</feature>
<feature type="region of interest" description="RNA-binding" evidence="1">
    <location>
        <begin position="572"/>
        <end position="655"/>
    </location>
</feature>
<feature type="coiled-coil region" evidence="3">
    <location>
        <begin position="489"/>
        <end position="546"/>
    </location>
</feature>
<feature type="short sequence motif" description="DECH box">
    <location>
        <begin position="131"/>
        <end position="134"/>
    </location>
</feature>
<feature type="binding site" evidence="4">
    <location>
        <begin position="24"/>
        <end position="31"/>
    </location>
    <ligand>
        <name>ATP</name>
        <dbReference type="ChEBI" id="CHEBI:30616"/>
    </ligand>
</feature>
<feature type="binding site" evidence="6">
    <location>
        <position position="556"/>
    </location>
    <ligand>
        <name>Zn(2+)</name>
        <dbReference type="ChEBI" id="CHEBI:29105"/>
    </ligand>
</feature>
<feature type="binding site" evidence="6">
    <location>
        <position position="559"/>
    </location>
    <ligand>
        <name>Zn(2+)</name>
        <dbReference type="ChEBI" id="CHEBI:29105"/>
    </ligand>
</feature>
<feature type="binding site" evidence="6">
    <location>
        <position position="612"/>
    </location>
    <ligand>
        <name>Zn(2+)</name>
        <dbReference type="ChEBI" id="CHEBI:29105"/>
    </ligand>
</feature>
<feature type="binding site" evidence="6">
    <location>
        <position position="615"/>
    </location>
    <ligand>
        <name>Zn(2+)</name>
        <dbReference type="ChEBI" id="CHEBI:29105"/>
    </ligand>
</feature>
<feature type="mutagenesis site" description="Abolishes IFNB1 production upon infection with various viruses." evidence="9">
    <original>K</original>
    <variation>A</variation>
    <location>
        <position position="30"/>
    </location>
</feature>
<feature type="sequence conflict" description="In Ref. 1; AAK15474/AAK15475 and 3; AAH29209." evidence="12" ref="1 3">
    <original>I</original>
    <variation>M</variation>
    <location>
        <position position="638"/>
    </location>
</feature>
<organism>
    <name type="scientific">Mus musculus</name>
    <name type="common">Mouse</name>
    <dbReference type="NCBI Taxonomy" id="10090"/>
    <lineage>
        <taxon>Eukaryota</taxon>
        <taxon>Metazoa</taxon>
        <taxon>Chordata</taxon>
        <taxon>Craniata</taxon>
        <taxon>Vertebrata</taxon>
        <taxon>Euteleostomi</taxon>
        <taxon>Mammalia</taxon>
        <taxon>Eutheria</taxon>
        <taxon>Euarchontoglires</taxon>
        <taxon>Glires</taxon>
        <taxon>Rodentia</taxon>
        <taxon>Myomorpha</taxon>
        <taxon>Muroidea</taxon>
        <taxon>Muridae</taxon>
        <taxon>Murinae</taxon>
        <taxon>Mus</taxon>
        <taxon>Mus</taxon>
    </lineage>
</organism>
<accession>Q99J87</accession>
<accession>A2A5E9</accession>
<accession>Q9D1X4</accession>
<gene>
    <name evidence="13" type="primary">Dhx58</name>
    <name type="synonym">D11lgp2e</name>
    <name type="synonym">Lgp2</name>
</gene>
<keyword id="KW-0051">Antiviral defense</keyword>
<keyword id="KW-0067">ATP-binding</keyword>
<keyword id="KW-0175">Coiled coil</keyword>
<keyword id="KW-0963">Cytoplasm</keyword>
<keyword id="KW-0347">Helicase</keyword>
<keyword id="KW-0378">Hydrolase</keyword>
<keyword id="KW-0391">Immunity</keyword>
<keyword id="KW-0399">Innate immunity</keyword>
<keyword id="KW-0479">Metal-binding</keyword>
<keyword id="KW-0547">Nucleotide-binding</keyword>
<keyword id="KW-1185">Reference proteome</keyword>
<keyword id="KW-0694">RNA-binding</keyword>
<keyword id="KW-0862">Zinc</keyword>
<protein>
    <recommendedName>
        <fullName evidence="2">ATP-dependent RNA helicase DHX58</fullName>
        <ecNumber evidence="2">3.6.4.13</ecNumber>
    </recommendedName>
    <alternativeName>
        <fullName evidence="2">ATP-dependent helicase LGP2</fullName>
    </alternativeName>
    <alternativeName>
        <fullName>Protein D11Lgp2</fullName>
    </alternativeName>
    <alternativeName>
        <fullName>RIG-I-like receptor 3</fullName>
        <shortName>RLR-3</shortName>
    </alternativeName>
    <alternativeName>
        <fullName>RIG-I-like receptor Lgp2</fullName>
        <shortName>RLR</shortName>
    </alternativeName>
</protein>
<comment type="function">
    <text evidence="8 9 10 11">Acts as a regulator of RIGI and IFIH1/MDA5 mediated antiviral signaling. Cannot initiate antiviral signaling as it lacks the CARD domain required for activating MAVS/IPS1-dependent signaling events. Can have both negative and positive regulatory functions related to RIGI and IFIH1/MDA5 signaling and this role in regulating signaling may be complex and could probably depend on characteristics of the infecting virus or target cells, or both. Its inhibitory action on RIG-I signaling may involve the following mechanisms: competition with RIGI for binding to the viral RNA, binding to RIGI and inhibiting its dimerization and interaction with MAVS/IPS1, competing with IKBKE in its binding to MAVS/IPS1 thereby inhibiting activation of interferon regulatory factor 3 (IRF3). Its positive regulatory role may involve unwinding or stripping nucleoproteins of viral RNA thereby facilitating their recognition by RIGI and IFIH1/MDA5. Involved in the innate immune response to various RNA viruses and some DNA viruses such as poxviruses, and also to the bacterial pathogen Listeria monocytogenes. Can bind both ssRNA and dsRNA, with a higher affinity for dsRNA. Shows a preference to 5'-triphosphorylated RNA, although it can recognize RNA lacking a 5'-triphosphate.</text>
</comment>
<comment type="catalytic activity">
    <reaction evidence="2">
        <text>ATP + H2O = ADP + phosphate + H(+)</text>
        <dbReference type="Rhea" id="RHEA:13065"/>
        <dbReference type="ChEBI" id="CHEBI:15377"/>
        <dbReference type="ChEBI" id="CHEBI:15378"/>
        <dbReference type="ChEBI" id="CHEBI:30616"/>
        <dbReference type="ChEBI" id="CHEBI:43474"/>
        <dbReference type="ChEBI" id="CHEBI:456216"/>
        <dbReference type="EC" id="3.6.4.13"/>
    </reaction>
    <physiologicalReaction direction="left-to-right" evidence="2">
        <dbReference type="Rhea" id="RHEA:13066"/>
    </physiologicalReaction>
</comment>
<comment type="subunit">
    <text evidence="2">Monomer in the absence of dsRNA. Homodimer in the presence of dsRNA. Interacts with RIGI (via CARD domain), MAVS/IPS1 and DDX60. Found in a complex with RIGI and IFIH1/MDA5. Interacts with ANKRD17. Directly interacts with ATG5 and ATG12, either as ATG5 and ATG12 monomers or as ATG12-ATG5 conjugates (By similarity).</text>
</comment>
<comment type="subcellular location">
    <subcellularLocation>
        <location evidence="7">Cytoplasm</location>
    </subcellularLocation>
</comment>
<comment type="tissue specificity">
    <text evidence="7">Highly expressed in mammary tissues. Expressed in liver and testis. Expressed at lower level in spleen, embryo, mammary gland and breast tumors.</text>
</comment>
<comment type="induction">
    <text>By interferon (IFN), virus infection, or intracellular dsRNA.</text>
</comment>
<comment type="domain">
    <text>The RLR CTR domain is capable of inhibiting dimerization and signaling of RIGI and also facilitates binding of dsRNA.</text>
</comment>
<comment type="disruption phenotype">
    <text evidence="9">Embryonic lethality at a high frequency. Adult female that survive show an enlarged uterus filled with fluid resulting from vaginal atresia.</text>
</comment>
<comment type="similarity">
    <text evidence="12">Belongs to the helicase family. RLR subfamily.</text>
</comment>
<evidence type="ECO:0000250" key="1"/>
<evidence type="ECO:0000250" key="2">
    <source>
        <dbReference type="UniProtKB" id="Q96C10"/>
    </source>
</evidence>
<evidence type="ECO:0000255" key="3"/>
<evidence type="ECO:0000255" key="4">
    <source>
        <dbReference type="PROSITE-ProRule" id="PRU00541"/>
    </source>
</evidence>
<evidence type="ECO:0000255" key="5">
    <source>
        <dbReference type="PROSITE-ProRule" id="PRU00542"/>
    </source>
</evidence>
<evidence type="ECO:0000255" key="6">
    <source>
        <dbReference type="PROSITE-ProRule" id="PRU01125"/>
    </source>
</evidence>
<evidence type="ECO:0000269" key="7">
    <source>
    </source>
</evidence>
<evidence type="ECO:0000269" key="8">
    <source>
    </source>
</evidence>
<evidence type="ECO:0000269" key="9">
    <source>
    </source>
</evidence>
<evidence type="ECO:0000269" key="10">
    <source>
    </source>
</evidence>
<evidence type="ECO:0000269" key="11">
    <source>
    </source>
</evidence>
<evidence type="ECO:0000305" key="12"/>
<evidence type="ECO:0000312" key="13">
    <source>
        <dbReference type="MGI" id="MGI:1931560"/>
    </source>
</evidence>
<sequence length="678" mass="76709">MELRPYQWEVILPALEGKNIIIWLPTGAGKTRAAAFVAKRHLETVDRGKVVVLVNRVHLVSQHAEEFRRMLDKHWTVTTLSGDMGSRAGFGLMARSHDLLICTAELLQLALNSSEEDEHVELREFSLIVVDECHHTHKDTVYNTILSRYLEQKLKKAEPLPQVLGLTASPGTGGATKLQGAIDHILQLCANLDTCHIMSPKNCYSQLLMHNPKPCKQYDLCQRRAQDPFGDLIKKLMNQIHQQLEMPDLKQQFGTQMYEQQVVQLCKDAAEAGLQEQRVYALHLRRYNDALFIHDTVRARDALDMLQDFYDRERTTKTQMVRAESWLLKLFDDHKNVLGQLAARGPENPKLEMLERILLKQFGSPGHTRGIIFTRTRQTASSLLLWLRQQPCLQTVGIKPQMLIGAGNTSQSTHMTQKDQQEVIQEFRDGILSLLVATSVAEEGLDIAQCNVVVRYGLLTNEISMVQARGRARAGQSVYSFLATEGSREMKRELTNEALEVLMEKAVAAVQKMDPDEFKAKIRDLQQASLVKRAARAAHREIQQGQFLPEHVQLLCINCMVAVGYGSDLRKVEGTHHVNVNPNFSVYYTTSQNPVVINKVFKDWRPGGTIRCSNCGEVWGFQMIYKSVTLPVLKIGSILLETPRGKIQAKKWSRVPFSIPVFDILQDCTQSLSELSLD</sequence>